<feature type="chain" id="PRO_0000389087" description="Uncharacterized protein ORF170">
    <location>
        <begin position="1"/>
        <end position="170"/>
    </location>
</feature>
<dbReference type="EMBL" id="AJ888457">
    <property type="protein sequence ID" value="CAI59912.1"/>
    <property type="molecule type" value="Genomic_DNA"/>
</dbReference>
<dbReference type="RefSeq" id="YP_319896.1">
    <property type="nucleotide sequence ID" value="NC_007409.1"/>
</dbReference>
<dbReference type="GeneID" id="4484268"/>
<dbReference type="KEGG" id="vg:4484268"/>
<dbReference type="Proteomes" id="UP000002150">
    <property type="component" value="Genome"/>
</dbReference>
<keyword id="KW-1185">Reference proteome</keyword>
<proteinExistence type="predicted"/>
<sequence length="170" mass="20168">MVDYKKVYLLNISIRRFTKRRSMTKYEEDKKIRIIEEYFDGNEDIPPRLSFLISGISVSTRLFRLLYPHKMSQVPSVLEEVKKYLNGRNGIEVVLDYFPLYLPKPILLGLLNEALLKKKARYNQIRNDPFKSEYDKQRALAMLEESLKDIQIFIEYLKKEDGLQSIQKLA</sequence>
<name>Y170_ATV</name>
<protein>
    <recommendedName>
        <fullName>Uncharacterized protein ORF170</fullName>
    </recommendedName>
</protein>
<organismHost>
    <name type="scientific">Acidianus convivator</name>
    <dbReference type="NCBI Taxonomy" id="269667"/>
</organismHost>
<accession>Q3V4Q2</accession>
<reference key="1">
    <citation type="journal article" date="2005" name="Nature">
        <title>Virology: independent virus development outside a host.</title>
        <authorList>
            <person name="Haring M."/>
            <person name="Vestergaard G."/>
            <person name="Rachel R."/>
            <person name="Chen L."/>
            <person name="Garrett R.A."/>
            <person name="Prangishvili D."/>
        </authorList>
    </citation>
    <scope>NUCLEOTIDE SEQUENCE [GENOMIC DNA]</scope>
</reference>
<organism>
    <name type="scientific">Acidianus two-tailed virus</name>
    <name type="common">ATV</name>
    <dbReference type="NCBI Taxonomy" id="315953"/>
    <lineage>
        <taxon>Viruses</taxon>
        <taxon>Viruses incertae sedis</taxon>
        <taxon>Bicaudaviridae</taxon>
        <taxon>Bicaudavirus</taxon>
    </lineage>
</organism>